<accession>A2BP40</accession>
<feature type="chain" id="PRO_0000305661" description="Phosphoglucosamine mutase">
    <location>
        <begin position="1"/>
        <end position="450"/>
    </location>
</feature>
<feature type="active site" description="Phosphoserine intermediate" evidence="1">
    <location>
        <position position="97"/>
    </location>
</feature>
<feature type="binding site" description="via phosphate group" evidence="1">
    <location>
        <position position="97"/>
    </location>
    <ligand>
        <name>Mg(2+)</name>
        <dbReference type="ChEBI" id="CHEBI:18420"/>
    </ligand>
</feature>
<feature type="binding site" evidence="1">
    <location>
        <position position="236"/>
    </location>
    <ligand>
        <name>Mg(2+)</name>
        <dbReference type="ChEBI" id="CHEBI:18420"/>
    </ligand>
</feature>
<feature type="binding site" evidence="1">
    <location>
        <position position="238"/>
    </location>
    <ligand>
        <name>Mg(2+)</name>
        <dbReference type="ChEBI" id="CHEBI:18420"/>
    </ligand>
</feature>
<feature type="binding site" evidence="1">
    <location>
        <position position="240"/>
    </location>
    <ligand>
        <name>Mg(2+)</name>
        <dbReference type="ChEBI" id="CHEBI:18420"/>
    </ligand>
</feature>
<feature type="modified residue" description="Phosphoserine" evidence="1">
    <location>
        <position position="97"/>
    </location>
</feature>
<evidence type="ECO:0000255" key="1">
    <source>
        <dbReference type="HAMAP-Rule" id="MF_01554"/>
    </source>
</evidence>
<protein>
    <recommendedName>
        <fullName evidence="1">Phosphoglucosamine mutase</fullName>
        <ecNumber evidence="1">5.4.2.10</ecNumber>
    </recommendedName>
</protein>
<organism>
    <name type="scientific">Prochlorococcus marinus (strain AS9601)</name>
    <dbReference type="NCBI Taxonomy" id="146891"/>
    <lineage>
        <taxon>Bacteria</taxon>
        <taxon>Bacillati</taxon>
        <taxon>Cyanobacteriota</taxon>
        <taxon>Cyanophyceae</taxon>
        <taxon>Synechococcales</taxon>
        <taxon>Prochlorococcaceae</taxon>
        <taxon>Prochlorococcus</taxon>
    </lineage>
</organism>
<name>GLMM_PROMS</name>
<gene>
    <name evidence="1" type="primary">glmM</name>
    <name type="ordered locus">A9601_02631</name>
</gene>
<keyword id="KW-0413">Isomerase</keyword>
<keyword id="KW-0460">Magnesium</keyword>
<keyword id="KW-0479">Metal-binding</keyword>
<keyword id="KW-0597">Phosphoprotein</keyword>
<reference key="1">
    <citation type="journal article" date="2007" name="PLoS Genet.">
        <title>Patterns and implications of gene gain and loss in the evolution of Prochlorococcus.</title>
        <authorList>
            <person name="Kettler G.C."/>
            <person name="Martiny A.C."/>
            <person name="Huang K."/>
            <person name="Zucker J."/>
            <person name="Coleman M.L."/>
            <person name="Rodrigue S."/>
            <person name="Chen F."/>
            <person name="Lapidus A."/>
            <person name="Ferriera S."/>
            <person name="Johnson J."/>
            <person name="Steglich C."/>
            <person name="Church G.M."/>
            <person name="Richardson P."/>
            <person name="Chisholm S.W."/>
        </authorList>
    </citation>
    <scope>NUCLEOTIDE SEQUENCE [LARGE SCALE GENOMIC DNA]</scope>
    <source>
        <strain>AS9601</strain>
    </source>
</reference>
<dbReference type="EC" id="5.4.2.10" evidence="1"/>
<dbReference type="EMBL" id="CP000551">
    <property type="protein sequence ID" value="ABM69551.1"/>
    <property type="molecule type" value="Genomic_DNA"/>
</dbReference>
<dbReference type="RefSeq" id="WP_011817735.1">
    <property type="nucleotide sequence ID" value="NC_008816.1"/>
</dbReference>
<dbReference type="SMR" id="A2BP40"/>
<dbReference type="STRING" id="146891.A9601_02631"/>
<dbReference type="KEGG" id="pmb:A9601_02631"/>
<dbReference type="eggNOG" id="COG1109">
    <property type="taxonomic scope" value="Bacteria"/>
</dbReference>
<dbReference type="HOGENOM" id="CLU_016950_7_0_3"/>
<dbReference type="OrthoDB" id="9806956at2"/>
<dbReference type="Proteomes" id="UP000002590">
    <property type="component" value="Chromosome"/>
</dbReference>
<dbReference type="GO" id="GO:0005829">
    <property type="term" value="C:cytosol"/>
    <property type="evidence" value="ECO:0007669"/>
    <property type="project" value="TreeGrafter"/>
</dbReference>
<dbReference type="GO" id="GO:0000287">
    <property type="term" value="F:magnesium ion binding"/>
    <property type="evidence" value="ECO:0007669"/>
    <property type="project" value="UniProtKB-UniRule"/>
</dbReference>
<dbReference type="GO" id="GO:0008966">
    <property type="term" value="F:phosphoglucosamine mutase activity"/>
    <property type="evidence" value="ECO:0007669"/>
    <property type="project" value="UniProtKB-UniRule"/>
</dbReference>
<dbReference type="GO" id="GO:0004615">
    <property type="term" value="F:phosphomannomutase activity"/>
    <property type="evidence" value="ECO:0007669"/>
    <property type="project" value="TreeGrafter"/>
</dbReference>
<dbReference type="GO" id="GO:0005975">
    <property type="term" value="P:carbohydrate metabolic process"/>
    <property type="evidence" value="ECO:0007669"/>
    <property type="project" value="InterPro"/>
</dbReference>
<dbReference type="GO" id="GO:0009252">
    <property type="term" value="P:peptidoglycan biosynthetic process"/>
    <property type="evidence" value="ECO:0007669"/>
    <property type="project" value="TreeGrafter"/>
</dbReference>
<dbReference type="GO" id="GO:0006048">
    <property type="term" value="P:UDP-N-acetylglucosamine biosynthetic process"/>
    <property type="evidence" value="ECO:0007669"/>
    <property type="project" value="TreeGrafter"/>
</dbReference>
<dbReference type="CDD" id="cd05802">
    <property type="entry name" value="GlmM"/>
    <property type="match status" value="1"/>
</dbReference>
<dbReference type="FunFam" id="3.40.120.10:FF:000001">
    <property type="entry name" value="Phosphoglucosamine mutase"/>
    <property type="match status" value="1"/>
</dbReference>
<dbReference type="FunFam" id="3.40.120.10:FF:000002">
    <property type="entry name" value="Phosphoglucosamine mutase"/>
    <property type="match status" value="1"/>
</dbReference>
<dbReference type="Gene3D" id="3.40.120.10">
    <property type="entry name" value="Alpha-D-Glucose-1,6-Bisphosphate, subunit A, domain 3"/>
    <property type="match status" value="3"/>
</dbReference>
<dbReference type="Gene3D" id="3.30.310.50">
    <property type="entry name" value="Alpha-D-phosphohexomutase, C-terminal domain"/>
    <property type="match status" value="1"/>
</dbReference>
<dbReference type="HAMAP" id="MF_01554_B">
    <property type="entry name" value="GlmM_B"/>
    <property type="match status" value="1"/>
</dbReference>
<dbReference type="InterPro" id="IPR005844">
    <property type="entry name" value="A-D-PHexomutase_a/b/a-I"/>
</dbReference>
<dbReference type="InterPro" id="IPR016055">
    <property type="entry name" value="A-D-PHexomutase_a/b/a-I/II/III"/>
</dbReference>
<dbReference type="InterPro" id="IPR005845">
    <property type="entry name" value="A-D-PHexomutase_a/b/a-II"/>
</dbReference>
<dbReference type="InterPro" id="IPR005846">
    <property type="entry name" value="A-D-PHexomutase_a/b/a-III"/>
</dbReference>
<dbReference type="InterPro" id="IPR005843">
    <property type="entry name" value="A-D-PHexomutase_C"/>
</dbReference>
<dbReference type="InterPro" id="IPR036900">
    <property type="entry name" value="A-D-PHexomutase_C_sf"/>
</dbReference>
<dbReference type="InterPro" id="IPR016066">
    <property type="entry name" value="A-D-PHexomutase_CS"/>
</dbReference>
<dbReference type="InterPro" id="IPR005841">
    <property type="entry name" value="Alpha-D-phosphohexomutase_SF"/>
</dbReference>
<dbReference type="InterPro" id="IPR006352">
    <property type="entry name" value="GlmM_bact"/>
</dbReference>
<dbReference type="InterPro" id="IPR050060">
    <property type="entry name" value="Phosphoglucosamine_mutase"/>
</dbReference>
<dbReference type="PANTHER" id="PTHR42946:SF1">
    <property type="entry name" value="PHOSPHOGLUCOMUTASE (ALPHA-D-GLUCOSE-1,6-BISPHOSPHATE-DEPENDENT)"/>
    <property type="match status" value="1"/>
</dbReference>
<dbReference type="PANTHER" id="PTHR42946">
    <property type="entry name" value="PHOSPHOHEXOSE MUTASE"/>
    <property type="match status" value="1"/>
</dbReference>
<dbReference type="Pfam" id="PF02878">
    <property type="entry name" value="PGM_PMM_I"/>
    <property type="match status" value="1"/>
</dbReference>
<dbReference type="Pfam" id="PF02879">
    <property type="entry name" value="PGM_PMM_II"/>
    <property type="match status" value="1"/>
</dbReference>
<dbReference type="Pfam" id="PF02880">
    <property type="entry name" value="PGM_PMM_III"/>
    <property type="match status" value="1"/>
</dbReference>
<dbReference type="Pfam" id="PF00408">
    <property type="entry name" value="PGM_PMM_IV"/>
    <property type="match status" value="1"/>
</dbReference>
<dbReference type="PRINTS" id="PR00509">
    <property type="entry name" value="PGMPMM"/>
</dbReference>
<dbReference type="SUPFAM" id="SSF55957">
    <property type="entry name" value="Phosphoglucomutase, C-terminal domain"/>
    <property type="match status" value="1"/>
</dbReference>
<dbReference type="SUPFAM" id="SSF53738">
    <property type="entry name" value="Phosphoglucomutase, first 3 domains"/>
    <property type="match status" value="3"/>
</dbReference>
<dbReference type="PROSITE" id="PS00710">
    <property type="entry name" value="PGM_PMM"/>
    <property type="match status" value="1"/>
</dbReference>
<comment type="function">
    <text evidence="1">Catalyzes the conversion of glucosamine-6-phosphate to glucosamine-1-phosphate.</text>
</comment>
<comment type="catalytic activity">
    <reaction evidence="1">
        <text>alpha-D-glucosamine 1-phosphate = D-glucosamine 6-phosphate</text>
        <dbReference type="Rhea" id="RHEA:23424"/>
        <dbReference type="ChEBI" id="CHEBI:58516"/>
        <dbReference type="ChEBI" id="CHEBI:58725"/>
        <dbReference type="EC" id="5.4.2.10"/>
    </reaction>
</comment>
<comment type="cofactor">
    <cofactor evidence="1">
        <name>Mg(2+)</name>
        <dbReference type="ChEBI" id="CHEBI:18420"/>
    </cofactor>
    <text evidence="1">Binds 1 Mg(2+) ion per subunit.</text>
</comment>
<comment type="PTM">
    <text evidence="1">Activated by phosphorylation.</text>
</comment>
<comment type="similarity">
    <text evidence="1">Belongs to the phosphohexose mutase family.</text>
</comment>
<proteinExistence type="inferred from homology"/>
<sequence>MQSIFGTDGIRGRFNEELTYSLAYKVGYALGSTLKKKSPILIGRDTRISGDILLQAITQGINESGKKFINLGICPTPAIPFLIKKENLSSGIMISASHNPPEYNGIKIFDHNGQKITRYFENKIQKLIEETNQNISVPTKVIPLNTNKNLMDIYIKSLVQAMDGENLSGLKIILDTCYGSATTCAKEIFQSLGADVRVINNSKNGSKINMNCGSTNLAPLKKALKESPADMGFSFDEDADRVIGIDSKGNVLDGDHILFLWGRELMEQKILTNNLLISTQMANLGFEKAWKKIGGVLYRTDVGDKYVHEAIKEKRAVLGGEQSGHILSKINNFSGDGILTALQISKYCKKKNINLNDWLKSSFEPFPQKLTNIKLNFNINKLSLKAKILIDKTIENFQALYSHNCRVYIRPSGTEPLIRVLVEAKSHKKVNSLSSEITNKLSLEINKIIN</sequence>